<accession>C8V3W6</accession>
<accession>Q5B733</accession>
<organism>
    <name type="scientific">Emericella nidulans (strain FGSC A4 / ATCC 38163 / CBS 112.46 / NRRL 194 / M139)</name>
    <name type="common">Aspergillus nidulans</name>
    <dbReference type="NCBI Taxonomy" id="227321"/>
    <lineage>
        <taxon>Eukaryota</taxon>
        <taxon>Fungi</taxon>
        <taxon>Dikarya</taxon>
        <taxon>Ascomycota</taxon>
        <taxon>Pezizomycotina</taxon>
        <taxon>Eurotiomycetes</taxon>
        <taxon>Eurotiomycetidae</taxon>
        <taxon>Eurotiales</taxon>
        <taxon>Aspergillaceae</taxon>
        <taxon>Aspergillus</taxon>
        <taxon>Aspergillus subgen. Nidulantes</taxon>
    </lineage>
</organism>
<gene>
    <name type="ORF">AN10433</name>
</gene>
<dbReference type="EMBL" id="AACD01000061">
    <property type="protein sequence ID" value="EAA59855.1"/>
    <property type="status" value="ALT_SEQ"/>
    <property type="molecule type" value="Genomic_DNA"/>
</dbReference>
<dbReference type="EMBL" id="BN001302">
    <property type="protein sequence ID" value="CBF75703.1"/>
    <property type="molecule type" value="Genomic_DNA"/>
</dbReference>
<dbReference type="SMR" id="C8V3W6"/>
<dbReference type="FunCoup" id="C8V3W6">
    <property type="interactions" value="279"/>
</dbReference>
<dbReference type="STRING" id="227321.C8V3W6"/>
<dbReference type="EnsemblFungi" id="CBF75703">
    <property type="protein sequence ID" value="CBF75703"/>
    <property type="gene ID" value="ANIA_10433"/>
</dbReference>
<dbReference type="VEuPathDB" id="FungiDB:AN10433"/>
<dbReference type="eggNOG" id="ENOG502QSAH">
    <property type="taxonomic scope" value="Eukaryota"/>
</dbReference>
<dbReference type="HOGENOM" id="CLU_005651_0_0_1"/>
<dbReference type="InParanoid" id="C8V3W6"/>
<dbReference type="OMA" id="ETYMTDL"/>
<dbReference type="OrthoDB" id="1914839at2759"/>
<dbReference type="Proteomes" id="UP000000560">
    <property type="component" value="Chromosome II"/>
</dbReference>
<dbReference type="GO" id="GO:0005737">
    <property type="term" value="C:cytoplasm"/>
    <property type="evidence" value="ECO:0007669"/>
    <property type="project" value="UniProtKB-SubCell"/>
</dbReference>
<dbReference type="GO" id="GO:0005634">
    <property type="term" value="C:nucleus"/>
    <property type="evidence" value="ECO:0007669"/>
    <property type="project" value="UniProtKB-SubCell"/>
</dbReference>
<dbReference type="GO" id="GO:0051301">
    <property type="term" value="P:cell division"/>
    <property type="evidence" value="ECO:0000318"/>
    <property type="project" value="GO_Central"/>
</dbReference>
<dbReference type="GO" id="GO:0042254">
    <property type="term" value="P:ribosome biogenesis"/>
    <property type="evidence" value="ECO:0007669"/>
    <property type="project" value="UniProtKB-KW"/>
</dbReference>
<dbReference type="CDD" id="cd24142">
    <property type="entry name" value="ACL4-like"/>
    <property type="match status" value="1"/>
</dbReference>
<dbReference type="Gene3D" id="1.25.40.10">
    <property type="entry name" value="Tetratricopeptide repeat domain"/>
    <property type="match status" value="2"/>
</dbReference>
<dbReference type="InterPro" id="IPR011990">
    <property type="entry name" value="TPR-like_helical_dom_sf"/>
</dbReference>
<dbReference type="InterPro" id="IPR019734">
    <property type="entry name" value="TPR_rpt"/>
</dbReference>
<dbReference type="Pfam" id="PF13424">
    <property type="entry name" value="TPR_12"/>
    <property type="match status" value="1"/>
</dbReference>
<dbReference type="SMART" id="SM00028">
    <property type="entry name" value="TPR"/>
    <property type="match status" value="3"/>
</dbReference>
<dbReference type="SUPFAM" id="SSF48452">
    <property type="entry name" value="TPR-like"/>
    <property type="match status" value="1"/>
</dbReference>
<dbReference type="PROSITE" id="PS50005">
    <property type="entry name" value="TPR"/>
    <property type="match status" value="2"/>
</dbReference>
<dbReference type="PROSITE" id="PS50293">
    <property type="entry name" value="TPR_REGION"/>
    <property type="match status" value="1"/>
</dbReference>
<comment type="function">
    <text evidence="1">Acts as a chaperone for the L4 ribosomal subunit, required for hierarchical ribosome assembly. Shields ribosomal protein L4 until timely release and insertion into the pre-ribosome is possible, once ribosomal protein L18 is present.</text>
</comment>
<comment type="subcellular location">
    <subcellularLocation>
        <location evidence="1">Cytoplasm</location>
    </subcellularLocation>
    <subcellularLocation>
        <location evidence="1">Nucleus</location>
    </subcellularLocation>
    <text evidence="1">Distributed throughout the cell but is enriched in the nucleus.</text>
</comment>
<comment type="similarity">
    <text evidence="3">Belongs to the ACL4 family.</text>
</comment>
<comment type="sequence caution" evidence="3">
    <conflict type="erroneous gene model prediction">
        <sequence resource="EMBL-CDS" id="EAA59855"/>
    </conflict>
    <text>The predicted gene AN3647 has been split into 3 genes: AN10433, AN10449 and AN10450.</text>
</comment>
<protein>
    <recommendedName>
        <fullName evidence="3">Probable assembly chaperone of rpl4</fullName>
    </recommendedName>
</protein>
<name>ACL4_EMENI</name>
<sequence>MGKPRPHKKKASKTREKSVLSAGGSISKRKMNEDPRKLLEQATILLQTGQADAALSIAQQALEIATSNSPAQLSSLNTIAEIYVELGEIDLARKHFLQAVELDPTGSIPESEGGGAEKFLWLAQLSELGGKDSVQWFEKGVGALRGIFRRSPLFFIAFSRASYQADIFRWEEDAESRCENLITEALLVQPSSPEVLQTLASIRISQLREDDARAALSRSLELWKDLPPEDPHVPDFPTRISLSRLLMEVSMLLEALEVLERLILEDDQSVEAWYLGGWCLQLLAEIGEAPRDPEAESNETPESKRHASLVASREWLKQSLMLYDLVQYEDERLKEHALELVEAMNKELGEEMEDDSNVEDGEGEGEEEWEGIESDSDHEMADS</sequence>
<evidence type="ECO:0000250" key="1">
    <source>
        <dbReference type="UniProtKB" id="Q03771"/>
    </source>
</evidence>
<evidence type="ECO:0000256" key="2">
    <source>
        <dbReference type="SAM" id="MobiDB-lite"/>
    </source>
</evidence>
<evidence type="ECO:0000305" key="3"/>
<proteinExistence type="inferred from homology"/>
<reference key="1">
    <citation type="journal article" date="2005" name="Nature">
        <title>Sequencing of Aspergillus nidulans and comparative analysis with A. fumigatus and A. oryzae.</title>
        <authorList>
            <person name="Galagan J.E."/>
            <person name="Calvo S.E."/>
            <person name="Cuomo C."/>
            <person name="Ma L.-J."/>
            <person name="Wortman J.R."/>
            <person name="Batzoglou S."/>
            <person name="Lee S.-I."/>
            <person name="Bastuerkmen M."/>
            <person name="Spevak C.C."/>
            <person name="Clutterbuck J."/>
            <person name="Kapitonov V."/>
            <person name="Jurka J."/>
            <person name="Scazzocchio C."/>
            <person name="Farman M.L."/>
            <person name="Butler J."/>
            <person name="Purcell S."/>
            <person name="Harris S."/>
            <person name="Braus G.H."/>
            <person name="Draht O."/>
            <person name="Busch S."/>
            <person name="D'Enfert C."/>
            <person name="Bouchier C."/>
            <person name="Goldman G.H."/>
            <person name="Bell-Pedersen D."/>
            <person name="Griffiths-Jones S."/>
            <person name="Doonan J.H."/>
            <person name="Yu J."/>
            <person name="Vienken K."/>
            <person name="Pain A."/>
            <person name="Freitag M."/>
            <person name="Selker E.U."/>
            <person name="Archer D.B."/>
            <person name="Penalva M.A."/>
            <person name="Oakley B.R."/>
            <person name="Momany M."/>
            <person name="Tanaka T."/>
            <person name="Kumagai T."/>
            <person name="Asai K."/>
            <person name="Machida M."/>
            <person name="Nierman W.C."/>
            <person name="Denning D.W."/>
            <person name="Caddick M.X."/>
            <person name="Hynes M."/>
            <person name="Paoletti M."/>
            <person name="Fischer R."/>
            <person name="Miller B.L."/>
            <person name="Dyer P.S."/>
            <person name="Sachs M.S."/>
            <person name="Osmani S.A."/>
            <person name="Birren B.W."/>
        </authorList>
    </citation>
    <scope>NUCLEOTIDE SEQUENCE [LARGE SCALE GENOMIC DNA]</scope>
    <source>
        <strain>FGSC A4 / ATCC 38163 / CBS 112.46 / NRRL 194 / M139</strain>
    </source>
</reference>
<reference key="2">
    <citation type="journal article" date="2009" name="Fungal Genet. Biol.">
        <title>The 2008 update of the Aspergillus nidulans genome annotation: a community effort.</title>
        <authorList>
            <person name="Wortman J.R."/>
            <person name="Gilsenan J.M."/>
            <person name="Joardar V."/>
            <person name="Deegan J."/>
            <person name="Clutterbuck J."/>
            <person name="Andersen M.R."/>
            <person name="Archer D."/>
            <person name="Bencina M."/>
            <person name="Braus G."/>
            <person name="Coutinho P."/>
            <person name="von Dohren H."/>
            <person name="Doonan J."/>
            <person name="Driessen A.J."/>
            <person name="Durek P."/>
            <person name="Espeso E."/>
            <person name="Fekete E."/>
            <person name="Flipphi M."/>
            <person name="Estrada C.G."/>
            <person name="Geysens S."/>
            <person name="Goldman G."/>
            <person name="de Groot P.W."/>
            <person name="Hansen K."/>
            <person name="Harris S.D."/>
            <person name="Heinekamp T."/>
            <person name="Helmstaedt K."/>
            <person name="Henrissat B."/>
            <person name="Hofmann G."/>
            <person name="Homan T."/>
            <person name="Horio T."/>
            <person name="Horiuchi H."/>
            <person name="James S."/>
            <person name="Jones M."/>
            <person name="Karaffa L."/>
            <person name="Karanyi Z."/>
            <person name="Kato M."/>
            <person name="Keller N."/>
            <person name="Kelly D.E."/>
            <person name="Kiel J.A."/>
            <person name="Kim J.M."/>
            <person name="van der Klei I.J."/>
            <person name="Klis F.M."/>
            <person name="Kovalchuk A."/>
            <person name="Krasevec N."/>
            <person name="Kubicek C.P."/>
            <person name="Liu B."/>
            <person name="Maccabe A."/>
            <person name="Meyer V."/>
            <person name="Mirabito P."/>
            <person name="Miskei M."/>
            <person name="Mos M."/>
            <person name="Mullins J."/>
            <person name="Nelson D.R."/>
            <person name="Nielsen J."/>
            <person name="Oakley B.R."/>
            <person name="Osmani S.A."/>
            <person name="Pakula T."/>
            <person name="Paszewski A."/>
            <person name="Paulsen I."/>
            <person name="Pilsyk S."/>
            <person name="Pocsi I."/>
            <person name="Punt P.J."/>
            <person name="Ram A.F."/>
            <person name="Ren Q."/>
            <person name="Robellet X."/>
            <person name="Robson G."/>
            <person name="Seiboth B."/>
            <person name="van Solingen P."/>
            <person name="Specht T."/>
            <person name="Sun J."/>
            <person name="Taheri-Talesh N."/>
            <person name="Takeshita N."/>
            <person name="Ussery D."/>
            <person name="vanKuyk P.A."/>
            <person name="Visser H."/>
            <person name="van de Vondervoort P.J."/>
            <person name="de Vries R.P."/>
            <person name="Walton J."/>
            <person name="Xiang X."/>
            <person name="Xiong Y."/>
            <person name="Zeng A.P."/>
            <person name="Brandt B.W."/>
            <person name="Cornell M.J."/>
            <person name="van den Hondel C.A."/>
            <person name="Visser J."/>
            <person name="Oliver S.G."/>
            <person name="Turner G."/>
        </authorList>
    </citation>
    <scope>GENOME REANNOTATION</scope>
    <source>
        <strain>FGSC A4 / ATCC 38163 / CBS 112.46 / NRRL 194 / M139</strain>
    </source>
</reference>
<keyword id="KW-0143">Chaperone</keyword>
<keyword id="KW-0963">Cytoplasm</keyword>
<keyword id="KW-0539">Nucleus</keyword>
<keyword id="KW-1185">Reference proteome</keyword>
<keyword id="KW-0677">Repeat</keyword>
<keyword id="KW-0690">Ribosome biogenesis</keyword>
<keyword id="KW-0802">TPR repeat</keyword>
<feature type="chain" id="PRO_0000417427" description="Probable assembly chaperone of rpl4">
    <location>
        <begin position="1"/>
        <end position="383"/>
    </location>
</feature>
<feature type="repeat" description="TPR 1">
    <location>
        <begin position="35"/>
        <end position="68"/>
    </location>
</feature>
<feature type="repeat" description="TPR 2">
    <location>
        <begin position="73"/>
        <end position="106"/>
    </location>
</feature>
<feature type="repeat" description="TPR 3">
    <location>
        <begin position="116"/>
        <end position="147"/>
    </location>
</feature>
<feature type="repeat" description="TPR 4">
    <location>
        <begin position="193"/>
        <end position="226"/>
    </location>
</feature>
<feature type="region of interest" description="Disordered" evidence="2">
    <location>
        <begin position="1"/>
        <end position="33"/>
    </location>
</feature>
<feature type="region of interest" description="Disordered" evidence="2">
    <location>
        <begin position="345"/>
        <end position="383"/>
    </location>
</feature>
<feature type="compositionally biased region" description="Basic residues" evidence="2">
    <location>
        <begin position="1"/>
        <end position="12"/>
    </location>
</feature>
<feature type="compositionally biased region" description="Acidic residues" evidence="2">
    <location>
        <begin position="350"/>
        <end position="374"/>
    </location>
</feature>